<sequence>MSSRLGAVPATSGPTTFKQQRSTRIVGAKNSRTQCSIKDNSFQYTIPHDDSLSGSSSASSCEPVSDFPASFRKSAYWMKMRRIKPAATSHVEGSGGVSAKGKRKPRQEEDEDYREFPQKKHKLYGRKQRPKTQPNPKSQARRIRKEPPVYAAGSLEEQWYLEIVDKGSVSCPTCQAVGRKTIEGLKKHMENCKQEMFTCHHCGKQLRSLAGMKYHVMANHNSLPILKAGDEIDEPSERERLRTVLKRLGKLRCMRESCSSSFTSIMGYLYHVRKCGKGAAELEKMTLKCHHCGKPYRSKAGLAYHLRSEHGPISFFPESGQPECLKEMNLESKSGGRVQRRSAKIAVYHLQELASAELAKEWPKRKVLQDLVPDDRKLKYTRPGLPTFSQEVLHKWKTDIKKYHRIQCPNQGCEAVYSSVSGLKAHLGSCTLGNFVAGKYKCLLCQKEFVSESGVKYHINSVHAEDWFVVNPTTTKSFEKLMKIKQRQQEEEKRRQQHRSRRSLRRRQQPGIELPETELSLRVGKDQRRNNEELVVSASCKEPEQEPVPAQFQKVKPPKTNHKRGRK</sequence>
<keyword id="KW-0238">DNA-binding</keyword>
<keyword id="KW-1017">Isopeptide bond</keyword>
<keyword id="KW-0479">Metal-binding</keyword>
<keyword id="KW-0539">Nucleus</keyword>
<keyword id="KW-1185">Reference proteome</keyword>
<keyword id="KW-0677">Repeat</keyword>
<keyword id="KW-0804">Transcription</keyword>
<keyword id="KW-0805">Transcription regulation</keyword>
<keyword id="KW-0832">Ubl conjugation</keyword>
<keyword id="KW-0862">Zinc</keyword>
<keyword id="KW-0863">Zinc-finger</keyword>
<gene>
    <name type="primary">ZNF512</name>
</gene>
<accession>Q5R6F3</accession>
<accession>Q5R5Q5</accession>
<comment type="function">
    <text>May be involved in transcriptional regulation.</text>
</comment>
<comment type="subcellular location">
    <subcellularLocation>
        <location evidence="4">Nucleus</location>
    </subcellularLocation>
</comment>
<comment type="similarity">
    <text evidence="4">Belongs to the krueppel C2H2-type zinc-finger protein family.</text>
</comment>
<protein>
    <recommendedName>
        <fullName>Zinc finger protein 512</fullName>
    </recommendedName>
</protein>
<dbReference type="EMBL" id="CR860537">
    <property type="protein sequence ID" value="CAH92663.1"/>
    <property type="molecule type" value="mRNA"/>
</dbReference>
<dbReference type="EMBL" id="CR860801">
    <property type="protein sequence ID" value="CAH92911.1"/>
    <property type="molecule type" value="mRNA"/>
</dbReference>
<dbReference type="RefSeq" id="NP_001126711.1">
    <property type="nucleotide sequence ID" value="NM_001133239.1"/>
</dbReference>
<dbReference type="RefSeq" id="NP_001128873.1">
    <property type="nucleotide sequence ID" value="NM_001135401.1"/>
</dbReference>
<dbReference type="FunCoup" id="Q5R6F3">
    <property type="interactions" value="2634"/>
</dbReference>
<dbReference type="STRING" id="9601.ENSPPYP00000014005"/>
<dbReference type="Ensembl" id="ENSPPYT00000014572.3">
    <property type="protein sequence ID" value="ENSPPYP00000014005.2"/>
    <property type="gene ID" value="ENSPPYG00000012540.3"/>
</dbReference>
<dbReference type="GeneID" id="100173711"/>
<dbReference type="KEGG" id="pon:100173711"/>
<dbReference type="CTD" id="84450"/>
<dbReference type="eggNOG" id="KOG1721">
    <property type="taxonomic scope" value="Eukaryota"/>
</dbReference>
<dbReference type="GeneTree" id="ENSGT00940000158595"/>
<dbReference type="HOGENOM" id="CLU_481412_0_0_1"/>
<dbReference type="InParanoid" id="Q5R6F3"/>
<dbReference type="OMA" id="SVEEQWY"/>
<dbReference type="OrthoDB" id="9949647at2759"/>
<dbReference type="TreeFam" id="TF331185"/>
<dbReference type="Proteomes" id="UP000001595">
    <property type="component" value="Chromosome 2A"/>
</dbReference>
<dbReference type="GO" id="GO:0005634">
    <property type="term" value="C:nucleus"/>
    <property type="evidence" value="ECO:0007669"/>
    <property type="project" value="UniProtKB-SubCell"/>
</dbReference>
<dbReference type="GO" id="GO:0003677">
    <property type="term" value="F:DNA binding"/>
    <property type="evidence" value="ECO:0007669"/>
    <property type="project" value="UniProtKB-KW"/>
</dbReference>
<dbReference type="GO" id="GO:0008270">
    <property type="term" value="F:zinc ion binding"/>
    <property type="evidence" value="ECO:0007669"/>
    <property type="project" value="UniProtKB-KW"/>
</dbReference>
<dbReference type="FunFam" id="3.30.160.60:FF:000177">
    <property type="entry name" value="Zinc finger protein 512"/>
    <property type="match status" value="1"/>
</dbReference>
<dbReference type="FunFam" id="3.30.160.60:FF:000270">
    <property type="entry name" value="Zinc finger protein 512"/>
    <property type="match status" value="1"/>
</dbReference>
<dbReference type="FunFam" id="3.30.160.60:FF:000580">
    <property type="entry name" value="Zinc finger protein 512"/>
    <property type="match status" value="1"/>
</dbReference>
<dbReference type="Gene3D" id="3.30.160.60">
    <property type="entry name" value="Classic Zinc Finger"/>
    <property type="match status" value="3"/>
</dbReference>
<dbReference type="InterPro" id="IPR052274">
    <property type="entry name" value="Krueppel_C2H2_Zn-finger"/>
</dbReference>
<dbReference type="InterPro" id="IPR048408">
    <property type="entry name" value="ZNF512_C2HC"/>
</dbReference>
<dbReference type="InterPro" id="IPR048403">
    <property type="entry name" value="ZNF512_znf-C2H2"/>
</dbReference>
<dbReference type="InterPro" id="IPR036236">
    <property type="entry name" value="Znf_C2H2_sf"/>
</dbReference>
<dbReference type="InterPro" id="IPR013087">
    <property type="entry name" value="Znf_C2H2_type"/>
</dbReference>
<dbReference type="PANTHER" id="PTHR22979:SF2">
    <property type="entry name" value="ZINC FINGER PROTEIN 512"/>
    <property type="match status" value="1"/>
</dbReference>
<dbReference type="PANTHER" id="PTHR22979">
    <property type="entry name" value="ZINC FINGER PROTEIN-RELATED"/>
    <property type="match status" value="1"/>
</dbReference>
<dbReference type="Pfam" id="PF00096">
    <property type="entry name" value="zf-C2H2"/>
    <property type="match status" value="1"/>
</dbReference>
<dbReference type="Pfam" id="PF21276">
    <property type="entry name" value="ZNF512_C2HC"/>
    <property type="match status" value="2"/>
</dbReference>
<dbReference type="Pfam" id="PF21367">
    <property type="entry name" value="ZNF512_zf-C2H2"/>
    <property type="match status" value="1"/>
</dbReference>
<dbReference type="SMART" id="SM00355">
    <property type="entry name" value="ZnF_C2H2"/>
    <property type="match status" value="4"/>
</dbReference>
<dbReference type="SUPFAM" id="SSF57667">
    <property type="entry name" value="beta-beta-alpha zinc fingers"/>
    <property type="match status" value="5"/>
</dbReference>
<dbReference type="PROSITE" id="PS00028">
    <property type="entry name" value="ZINC_FINGER_C2H2_1"/>
    <property type="match status" value="3"/>
</dbReference>
<dbReference type="PROSITE" id="PS50157">
    <property type="entry name" value="ZINC_FINGER_C2H2_2"/>
    <property type="match status" value="2"/>
</dbReference>
<organism>
    <name type="scientific">Pongo abelii</name>
    <name type="common">Sumatran orangutan</name>
    <name type="synonym">Pongo pygmaeus abelii</name>
    <dbReference type="NCBI Taxonomy" id="9601"/>
    <lineage>
        <taxon>Eukaryota</taxon>
        <taxon>Metazoa</taxon>
        <taxon>Chordata</taxon>
        <taxon>Craniata</taxon>
        <taxon>Vertebrata</taxon>
        <taxon>Euteleostomi</taxon>
        <taxon>Mammalia</taxon>
        <taxon>Eutheria</taxon>
        <taxon>Euarchontoglires</taxon>
        <taxon>Primates</taxon>
        <taxon>Haplorrhini</taxon>
        <taxon>Catarrhini</taxon>
        <taxon>Hominidae</taxon>
        <taxon>Pongo</taxon>
    </lineage>
</organism>
<feature type="chain" id="PRO_0000290350" description="Zinc finger protein 512">
    <location>
        <begin position="1"/>
        <end position="567"/>
    </location>
</feature>
<feature type="zinc finger region" description="C2H2-type 1" evidence="2">
    <location>
        <begin position="197"/>
        <end position="220"/>
    </location>
</feature>
<feature type="zinc finger region" description="C2H2-type 2" evidence="2">
    <location>
        <begin position="287"/>
        <end position="310"/>
    </location>
</feature>
<feature type="zinc finger region" description="C2H2-type 3; atypical" evidence="2">
    <location>
        <begin position="406"/>
        <end position="430"/>
    </location>
</feature>
<feature type="zinc finger region" description="C2H2-type 4" evidence="2">
    <location>
        <begin position="440"/>
        <end position="463"/>
    </location>
</feature>
<feature type="region of interest" description="Disordered" evidence="3">
    <location>
        <begin position="1"/>
        <end position="32"/>
    </location>
</feature>
<feature type="region of interest" description="Disordered" evidence="3">
    <location>
        <begin position="86"/>
        <end position="148"/>
    </location>
</feature>
<feature type="region of interest" description="Disordered" evidence="3">
    <location>
        <begin position="486"/>
        <end position="567"/>
    </location>
</feature>
<feature type="compositionally biased region" description="Polar residues" evidence="3">
    <location>
        <begin position="12"/>
        <end position="23"/>
    </location>
</feature>
<feature type="compositionally biased region" description="Basic residues" evidence="3">
    <location>
        <begin position="119"/>
        <end position="130"/>
    </location>
</feature>
<feature type="compositionally biased region" description="Basic residues" evidence="3">
    <location>
        <begin position="495"/>
        <end position="508"/>
    </location>
</feature>
<feature type="compositionally biased region" description="Basic and acidic residues" evidence="3">
    <location>
        <begin position="523"/>
        <end position="532"/>
    </location>
</feature>
<feature type="compositionally biased region" description="Basic residues" evidence="3">
    <location>
        <begin position="556"/>
        <end position="567"/>
    </location>
</feature>
<feature type="cross-link" description="Glycyl lysine isopeptide (Lys-Gly) (interchain with G-Cter in SUMO2)" evidence="1">
    <location>
        <position position="18"/>
    </location>
</feature>
<feature type="cross-link" description="Glycyl lysine isopeptide (Lys-Gly) (interchain with G-Cter in SUMO2)" evidence="1">
    <location>
        <position position="84"/>
    </location>
</feature>
<feature type="cross-link" description="Glycyl lysine isopeptide (Lys-Gly) (interchain with G-Cter in SUMO2)" evidence="1">
    <location>
        <position position="227"/>
    </location>
</feature>
<feature type="cross-link" description="Glycyl lysine isopeptide (Lys-Gly) (interchain with G-Cter in SUMO2)" evidence="1">
    <location>
        <position position="333"/>
    </location>
</feature>
<feature type="sequence conflict" description="In Ref. 1; CAH92911." evidence="4" ref="1">
    <original>R</original>
    <variation>S</variation>
    <location>
        <position position="4"/>
    </location>
</feature>
<feature type="sequence conflict" description="In Ref. 1; CAH92911." evidence="4" ref="1">
    <original>G</original>
    <variation>R</variation>
    <location>
        <position position="13"/>
    </location>
</feature>
<feature type="sequence conflict" description="In Ref. 1; CAH92911." evidence="4" ref="1">
    <location>
        <position position="31"/>
    </location>
</feature>
<feature type="sequence conflict" description="In Ref. 1; CAH92911." evidence="4" ref="1">
    <original>G</original>
    <variation>D</variation>
    <location>
        <position position="167"/>
    </location>
</feature>
<name>ZN512_PONAB</name>
<proteinExistence type="evidence at transcript level"/>
<reference key="1">
    <citation type="submission" date="2004-11" db="EMBL/GenBank/DDBJ databases">
        <authorList>
            <consortium name="The German cDNA consortium"/>
        </authorList>
    </citation>
    <scope>NUCLEOTIDE SEQUENCE [LARGE SCALE MRNA]</scope>
    <source>
        <tissue>Brain cortex</tissue>
    </source>
</reference>
<evidence type="ECO:0000250" key="1">
    <source>
        <dbReference type="UniProtKB" id="Q96ME7"/>
    </source>
</evidence>
<evidence type="ECO:0000255" key="2">
    <source>
        <dbReference type="PROSITE-ProRule" id="PRU00042"/>
    </source>
</evidence>
<evidence type="ECO:0000256" key="3">
    <source>
        <dbReference type="SAM" id="MobiDB-lite"/>
    </source>
</evidence>
<evidence type="ECO:0000305" key="4"/>